<keyword id="KW-0025">Alternative splicing</keyword>
<keyword id="KW-1003">Cell membrane</keyword>
<keyword id="KW-1015">Disulfide bond</keyword>
<keyword id="KW-0297">G-protein coupled receptor</keyword>
<keyword id="KW-0472">Membrane</keyword>
<keyword id="KW-0552">Olfaction</keyword>
<keyword id="KW-0675">Receptor</keyword>
<keyword id="KW-1185">Reference proteome</keyword>
<keyword id="KW-0716">Sensory transduction</keyword>
<keyword id="KW-0807">Transducer</keyword>
<keyword id="KW-0812">Transmembrane</keyword>
<keyword id="KW-1133">Transmembrane helix</keyword>
<comment type="function">
    <text evidence="8">Odorant receptor. Activated by (+) and (-)-limonene.</text>
</comment>
<comment type="subcellular location">
    <subcellularLocation>
        <location evidence="12">Cell membrane</location>
        <topology evidence="1">Multi-pass membrane protein</topology>
    </subcellularLocation>
</comment>
<comment type="alternative products">
    <event type="alternative splicing"/>
    <isoform>
        <id>Q8VGD6-1</id>
        <name evidence="3 4 5">1</name>
        <sequence type="displayed"/>
    </isoform>
    <isoform>
        <id>Q8VGD6-2</id>
        <name evidence="6 7">2</name>
        <sequence type="described" ref="VSP_046444"/>
    </isoform>
</comment>
<comment type="similarity">
    <text evidence="2">Belongs to the G-protein coupled receptor 1 family.</text>
</comment>
<organism>
    <name type="scientific">Mus musculus</name>
    <name type="common">Mouse</name>
    <dbReference type="NCBI Taxonomy" id="10090"/>
    <lineage>
        <taxon>Eukaryota</taxon>
        <taxon>Metazoa</taxon>
        <taxon>Chordata</taxon>
        <taxon>Craniata</taxon>
        <taxon>Vertebrata</taxon>
        <taxon>Euteleostomi</taxon>
        <taxon>Mammalia</taxon>
        <taxon>Eutheria</taxon>
        <taxon>Euarchontoglires</taxon>
        <taxon>Glires</taxon>
        <taxon>Rodentia</taxon>
        <taxon>Myomorpha</taxon>
        <taxon>Muroidea</taxon>
        <taxon>Muridae</taxon>
        <taxon>Murinae</taxon>
        <taxon>Mus</taxon>
        <taxon>Mus</taxon>
    </lineage>
</organism>
<dbReference type="EMBL" id="AY073214">
    <property type="protein sequence ID" value="AAL60877.1"/>
    <property type="molecule type" value="Genomic_DNA"/>
</dbReference>
<dbReference type="EMBL" id="AY318610">
    <property type="protein sequence ID" value="AAP71778.1"/>
    <property type="molecule type" value="Genomic_DNA"/>
</dbReference>
<dbReference type="EMBL" id="AK053352">
    <property type="protein sequence ID" value="BAC35358.1"/>
    <property type="molecule type" value="mRNA"/>
</dbReference>
<dbReference type="EMBL" id="AL627237">
    <property type="status" value="NOT_ANNOTATED_CDS"/>
    <property type="molecule type" value="Genomic_DNA"/>
</dbReference>
<dbReference type="EMBL" id="AL645688">
    <property type="status" value="NOT_ANNOTATED_CDS"/>
    <property type="molecule type" value="Genomic_DNA"/>
</dbReference>
<dbReference type="EMBL" id="CH466575">
    <property type="protein sequence ID" value="EDL33775.1"/>
    <property type="molecule type" value="Genomic_DNA"/>
</dbReference>
<dbReference type="EMBL" id="BC141219">
    <property type="protein sequence ID" value="AAI41220.1"/>
    <property type="molecule type" value="mRNA"/>
</dbReference>
<dbReference type="EMBL" id="BC147437">
    <property type="protein sequence ID" value="AAI47438.1"/>
    <property type="molecule type" value="mRNA"/>
</dbReference>
<dbReference type="EMBL" id="AF102533">
    <property type="protein sequence ID" value="AAD13325.1"/>
    <property type="molecule type" value="mRNA"/>
</dbReference>
<dbReference type="EMBL" id="AF102535">
    <property type="protein sequence ID" value="AAD13327.1"/>
    <property type="molecule type" value="mRNA"/>
</dbReference>
<dbReference type="EMBL" id="AF102537">
    <property type="protein sequence ID" value="AAD13329.1"/>
    <property type="molecule type" value="mRNA"/>
</dbReference>
<dbReference type="CCDS" id="CCDS24597.2">
    <molecule id="Q8VGD6-1"/>
</dbReference>
<dbReference type="RefSeq" id="NP_035129.2">
    <molecule id="Q8VGD6-1"/>
    <property type="nucleotide sequence ID" value="NM_010999.3"/>
</dbReference>
<dbReference type="SMR" id="Q8VGD6"/>
<dbReference type="FunCoup" id="Q8VGD6">
    <property type="interactions" value="1469"/>
</dbReference>
<dbReference type="STRING" id="10090.ENSMUSP00000136647"/>
<dbReference type="PaxDb" id="10090-ENSMUSP00000136647"/>
<dbReference type="ProteomicsDB" id="293511">
    <molecule id="Q8VGD6-1"/>
</dbReference>
<dbReference type="ProteomicsDB" id="293512">
    <molecule id="Q8VGD6-2"/>
</dbReference>
<dbReference type="DNASU" id="18356"/>
<dbReference type="Ensembl" id="ENSMUST00000102785.4">
    <molecule id="Q8VGD6-2"/>
    <property type="protein sequence ID" value="ENSMUSP00000099846.2"/>
    <property type="gene ID" value="ENSMUSG00000040328.18"/>
</dbReference>
<dbReference type="Ensembl" id="ENSMUST00000203149.3">
    <molecule id="Q8VGD6-1"/>
    <property type="protein sequence ID" value="ENSMUSP00000145429.2"/>
    <property type="gene ID" value="ENSMUSG00000040328.18"/>
</dbReference>
<dbReference type="Ensembl" id="ENSMUST00000203810.3">
    <molecule id="Q8VGD6-1"/>
    <property type="protein sequence ID" value="ENSMUSP00000144951.2"/>
    <property type="gene ID" value="ENSMUSG00000040328.18"/>
</dbReference>
<dbReference type="Ensembl" id="ENSMUST00000238881.2">
    <molecule id="Q8VGD6-1"/>
    <property type="protein sequence ID" value="ENSMUSP00000158965.2"/>
    <property type="gene ID" value="ENSMUSG00000040328.18"/>
</dbReference>
<dbReference type="Ensembl" id="ENSMUST00000239127.2">
    <molecule id="Q8VGD6-2"/>
    <property type="protein sequence ID" value="ENSMUSP00000159088.2"/>
    <property type="gene ID" value="ENSMUSG00000040328.18"/>
</dbReference>
<dbReference type="GeneID" id="18356"/>
<dbReference type="KEGG" id="mmu:18356"/>
<dbReference type="UCSC" id="uc007ipo.1">
    <molecule id="Q8VGD6-1"/>
    <property type="organism name" value="mouse"/>
</dbReference>
<dbReference type="AGR" id="MGI:1333785"/>
<dbReference type="CTD" id="26693"/>
<dbReference type="MGI" id="MGI:1333785">
    <property type="gene designation" value="Or2v1"/>
</dbReference>
<dbReference type="VEuPathDB" id="HostDB:ENSMUSG00000040328"/>
<dbReference type="eggNOG" id="ENOG502SHXQ">
    <property type="taxonomic scope" value="Eukaryota"/>
</dbReference>
<dbReference type="GeneTree" id="ENSGT01130000278260"/>
<dbReference type="HOGENOM" id="CLU_012526_1_0_1"/>
<dbReference type="InParanoid" id="Q8VGD6"/>
<dbReference type="OMA" id="MGIWLNQ"/>
<dbReference type="OrthoDB" id="9824700at2759"/>
<dbReference type="PhylomeDB" id="Q8VGD6"/>
<dbReference type="TreeFam" id="TF337295"/>
<dbReference type="BioGRID-ORCS" id="18356">
    <property type="hits" value="3 hits in 71 CRISPR screens"/>
</dbReference>
<dbReference type="ChiTaRS" id="Olfr56">
    <property type="organism name" value="mouse"/>
</dbReference>
<dbReference type="PRO" id="PR:Q8VGD6"/>
<dbReference type="Proteomes" id="UP000000589">
    <property type="component" value="Chromosome 11"/>
</dbReference>
<dbReference type="RNAct" id="Q8VGD6">
    <property type="molecule type" value="protein"/>
</dbReference>
<dbReference type="Bgee" id="ENSMUSG00000040328">
    <property type="expression patterns" value="Expressed in jejunum and 11 other cell types or tissues"/>
</dbReference>
<dbReference type="GO" id="GO:0016020">
    <property type="term" value="C:membrane"/>
    <property type="evidence" value="ECO:0000247"/>
    <property type="project" value="MGI"/>
</dbReference>
<dbReference type="GO" id="GO:0005886">
    <property type="term" value="C:plasma membrane"/>
    <property type="evidence" value="ECO:0007669"/>
    <property type="project" value="UniProtKB-SubCell"/>
</dbReference>
<dbReference type="GO" id="GO:0004930">
    <property type="term" value="F:G protein-coupled receptor activity"/>
    <property type="evidence" value="ECO:0007669"/>
    <property type="project" value="UniProtKB-KW"/>
</dbReference>
<dbReference type="GO" id="GO:0004984">
    <property type="term" value="F:olfactory receptor activity"/>
    <property type="evidence" value="ECO:0000247"/>
    <property type="project" value="MGI"/>
</dbReference>
<dbReference type="GO" id="GO:0007186">
    <property type="term" value="P:G protein-coupled receptor signaling pathway"/>
    <property type="evidence" value="ECO:0000247"/>
    <property type="project" value="MGI"/>
</dbReference>
<dbReference type="GO" id="GO:0007608">
    <property type="term" value="P:sensory perception of smell"/>
    <property type="evidence" value="ECO:0000247"/>
    <property type="project" value="MGI"/>
</dbReference>
<dbReference type="CDD" id="cd15421">
    <property type="entry name" value="7tmA_OR2T-like"/>
    <property type="match status" value="1"/>
</dbReference>
<dbReference type="FunFam" id="1.20.1070.10:FF:000008">
    <property type="entry name" value="Olfactory receptor"/>
    <property type="match status" value="1"/>
</dbReference>
<dbReference type="Gene3D" id="1.20.1070.10">
    <property type="entry name" value="Rhodopsin 7-helix transmembrane proteins"/>
    <property type="match status" value="1"/>
</dbReference>
<dbReference type="InterPro" id="IPR000276">
    <property type="entry name" value="GPCR_Rhodpsn"/>
</dbReference>
<dbReference type="InterPro" id="IPR017452">
    <property type="entry name" value="GPCR_Rhodpsn_7TM"/>
</dbReference>
<dbReference type="InterPro" id="IPR000725">
    <property type="entry name" value="Olfact_rcpt"/>
</dbReference>
<dbReference type="PANTHER" id="PTHR26453">
    <property type="entry name" value="OLFACTORY RECEPTOR"/>
    <property type="match status" value="1"/>
</dbReference>
<dbReference type="Pfam" id="PF13853">
    <property type="entry name" value="7tm_4"/>
    <property type="match status" value="1"/>
</dbReference>
<dbReference type="PRINTS" id="PR00237">
    <property type="entry name" value="GPCRRHODOPSN"/>
</dbReference>
<dbReference type="PRINTS" id="PR00245">
    <property type="entry name" value="OLFACTORYR"/>
</dbReference>
<dbReference type="SUPFAM" id="SSF81321">
    <property type="entry name" value="Family A G protein-coupled receptor-like"/>
    <property type="match status" value="1"/>
</dbReference>
<dbReference type="PROSITE" id="PS00237">
    <property type="entry name" value="G_PROTEIN_RECEP_F1_1"/>
    <property type="match status" value="1"/>
</dbReference>
<dbReference type="PROSITE" id="PS50262">
    <property type="entry name" value="G_PROTEIN_RECEP_F1_2"/>
    <property type="match status" value="1"/>
</dbReference>
<sequence length="315" mass="34994">MGIWLNESSVDGFILLGIFSQSQTDLLLFSTVMLVFTVALCGNVLLILLIYTDPRLHTPMYFFLSQLSLMDLMLVCNIVPKMAVNFLSGRKSISFAGCGIQIGFFVSLVGSEGLLLGLMAYDRYVAISHPLHYPILMSQKVCLQIAGSSWAFGILDGIIQMVAAMSLPYCGSRYIDHFFCEVPALLKLACADTSLFDTLLFACCVFMLLLPFSIIVTSYARILGAVLRMHSAQSRKKALATCSSHLTAVSLFYGAAMFIYLRPRRYRAPSHDKVVSIFYTVLTPMLNPLIYSLRNREVMGALRKGLDRCRVGSQH</sequence>
<evidence type="ECO:0000255" key="1"/>
<evidence type="ECO:0000255" key="2">
    <source>
        <dbReference type="PROSITE-ProRule" id="PRU00521"/>
    </source>
</evidence>
<evidence type="ECO:0000269" key="3">
    <source>
    </source>
</evidence>
<evidence type="ECO:0000269" key="4">
    <source>
    </source>
</evidence>
<evidence type="ECO:0000269" key="5">
    <source>
    </source>
</evidence>
<evidence type="ECO:0000269" key="6">
    <source>
    </source>
</evidence>
<evidence type="ECO:0000269" key="7">
    <source>
    </source>
</evidence>
<evidence type="ECO:0000269" key="8">
    <source>
    </source>
</evidence>
<evidence type="ECO:0000303" key="9">
    <source>
    </source>
</evidence>
<evidence type="ECO:0000303" key="10">
    <source>
    </source>
</evidence>
<evidence type="ECO:0000303" key="11">
    <source>
    </source>
</evidence>
<evidence type="ECO:0000305" key="12"/>
<evidence type="ECO:0000312" key="13">
    <source>
        <dbReference type="EMBL" id="AAD13325.1"/>
    </source>
</evidence>
<evidence type="ECO:0000312" key="14">
    <source>
        <dbReference type="EMBL" id="AAD13327.1"/>
    </source>
</evidence>
<evidence type="ECO:0000312" key="15">
    <source>
        <dbReference type="EMBL" id="AAD13329.1"/>
    </source>
</evidence>
<evidence type="ECO:0000312" key="16">
    <source>
        <dbReference type="EMBL" id="AAI41220.1"/>
    </source>
</evidence>
<evidence type="ECO:0000312" key="17">
    <source>
        <dbReference type="EMBL" id="AAL60877.1"/>
    </source>
</evidence>
<evidence type="ECO:0000312" key="18">
    <source>
        <dbReference type="EMBL" id="AAP71778.1"/>
    </source>
</evidence>
<evidence type="ECO:0000312" key="19">
    <source>
        <dbReference type="EMBL" id="BAC35358.1"/>
    </source>
</evidence>
<evidence type="ECO:0000312" key="20">
    <source>
        <dbReference type="EMBL" id="EDL33775.1"/>
    </source>
</evidence>
<evidence type="ECO:0000312" key="21">
    <source>
        <dbReference type="MGI" id="MGI:1333785"/>
    </source>
</evidence>
<protein>
    <recommendedName>
        <fullName evidence="12">Olfactory receptor 2V1</fullName>
    </recommendedName>
    <alternativeName>
        <fullName>Olfactory receptor 276-1</fullName>
    </alternativeName>
    <alternativeName>
        <fullName>Olfactory receptor 56</fullName>
    </alternativeName>
    <alternativeName>
        <fullName evidence="13">Olfactory receptor F7</fullName>
    </alternativeName>
    <alternativeName>
        <fullName evidence="14">Olfactory receptor G3</fullName>
    </alternativeName>
    <alternativeName>
        <fullName evidence="11">Olfactory receptor I-G7</fullName>
    </alternativeName>
</protein>
<name>OR2V1_MOUSE</name>
<accession>Q8VGD6</accession>
<accession>Q8BKF2</accession>
<accession>Q9QUL1</accession>
<accession>Q9Z1U2</accession>
<reference evidence="12 17" key="1">
    <citation type="journal article" date="2002" name="Nat. Neurosci.">
        <title>The olfactory receptor gene superfamily of the mouse.</title>
        <authorList>
            <person name="Zhang X."/>
            <person name="Firestein S."/>
        </authorList>
    </citation>
    <scope>NUCLEOTIDE SEQUENCE [GENOMIC DNA] (ISOFORM 1)</scope>
</reference>
<reference evidence="12 18" key="2">
    <citation type="journal article" date="2003" name="Genome Biol.">
        <title>Odorant receptor expressed sequence tags demonstrate olfactory expression of over 400 genes, extensive alternate splicing and unequal expression levels.</title>
        <authorList>
            <person name="Young J.M."/>
            <person name="Shykind B.M."/>
            <person name="Lane R.P."/>
            <person name="Tonnes-Priddy L."/>
            <person name="Ross J.A."/>
            <person name="Walker M."/>
            <person name="Williams E.M."/>
            <person name="Trask B.J."/>
        </authorList>
    </citation>
    <scope>NUCLEOTIDE SEQUENCE [GENOMIC DNA] (ISOFORM 1)</scope>
</reference>
<reference evidence="12 19" key="3">
    <citation type="journal article" date="2005" name="Science">
        <title>The transcriptional landscape of the mammalian genome.</title>
        <authorList>
            <person name="Carninci P."/>
            <person name="Kasukawa T."/>
            <person name="Katayama S."/>
            <person name="Gough J."/>
            <person name="Frith M.C."/>
            <person name="Maeda N."/>
            <person name="Oyama R."/>
            <person name="Ravasi T."/>
            <person name="Lenhard B."/>
            <person name="Wells C."/>
            <person name="Kodzius R."/>
            <person name="Shimokawa K."/>
            <person name="Bajic V.B."/>
            <person name="Brenner S.E."/>
            <person name="Batalov S."/>
            <person name="Forrest A.R."/>
            <person name="Zavolan M."/>
            <person name="Davis M.J."/>
            <person name="Wilming L.G."/>
            <person name="Aidinis V."/>
            <person name="Allen J.E."/>
            <person name="Ambesi-Impiombato A."/>
            <person name="Apweiler R."/>
            <person name="Aturaliya R.N."/>
            <person name="Bailey T.L."/>
            <person name="Bansal M."/>
            <person name="Baxter L."/>
            <person name="Beisel K.W."/>
            <person name="Bersano T."/>
            <person name="Bono H."/>
            <person name="Chalk A.M."/>
            <person name="Chiu K.P."/>
            <person name="Choudhary V."/>
            <person name="Christoffels A."/>
            <person name="Clutterbuck D.R."/>
            <person name="Crowe M.L."/>
            <person name="Dalla E."/>
            <person name="Dalrymple B.P."/>
            <person name="de Bono B."/>
            <person name="Della Gatta G."/>
            <person name="di Bernardo D."/>
            <person name="Down T."/>
            <person name="Engstrom P."/>
            <person name="Fagiolini M."/>
            <person name="Faulkner G."/>
            <person name="Fletcher C.F."/>
            <person name="Fukushima T."/>
            <person name="Furuno M."/>
            <person name="Futaki S."/>
            <person name="Gariboldi M."/>
            <person name="Georgii-Hemming P."/>
            <person name="Gingeras T.R."/>
            <person name="Gojobori T."/>
            <person name="Green R.E."/>
            <person name="Gustincich S."/>
            <person name="Harbers M."/>
            <person name="Hayashi Y."/>
            <person name="Hensch T.K."/>
            <person name="Hirokawa N."/>
            <person name="Hill D."/>
            <person name="Huminiecki L."/>
            <person name="Iacono M."/>
            <person name="Ikeo K."/>
            <person name="Iwama A."/>
            <person name="Ishikawa T."/>
            <person name="Jakt M."/>
            <person name="Kanapin A."/>
            <person name="Katoh M."/>
            <person name="Kawasawa Y."/>
            <person name="Kelso J."/>
            <person name="Kitamura H."/>
            <person name="Kitano H."/>
            <person name="Kollias G."/>
            <person name="Krishnan S.P."/>
            <person name="Kruger A."/>
            <person name="Kummerfeld S.K."/>
            <person name="Kurochkin I.V."/>
            <person name="Lareau L.F."/>
            <person name="Lazarevic D."/>
            <person name="Lipovich L."/>
            <person name="Liu J."/>
            <person name="Liuni S."/>
            <person name="McWilliam S."/>
            <person name="Madan Babu M."/>
            <person name="Madera M."/>
            <person name="Marchionni L."/>
            <person name="Matsuda H."/>
            <person name="Matsuzawa S."/>
            <person name="Miki H."/>
            <person name="Mignone F."/>
            <person name="Miyake S."/>
            <person name="Morris K."/>
            <person name="Mottagui-Tabar S."/>
            <person name="Mulder N."/>
            <person name="Nakano N."/>
            <person name="Nakauchi H."/>
            <person name="Ng P."/>
            <person name="Nilsson R."/>
            <person name="Nishiguchi S."/>
            <person name="Nishikawa S."/>
            <person name="Nori F."/>
            <person name="Ohara O."/>
            <person name="Okazaki Y."/>
            <person name="Orlando V."/>
            <person name="Pang K.C."/>
            <person name="Pavan W.J."/>
            <person name="Pavesi G."/>
            <person name="Pesole G."/>
            <person name="Petrovsky N."/>
            <person name="Piazza S."/>
            <person name="Reed J."/>
            <person name="Reid J.F."/>
            <person name="Ring B.Z."/>
            <person name="Ringwald M."/>
            <person name="Rost B."/>
            <person name="Ruan Y."/>
            <person name="Salzberg S.L."/>
            <person name="Sandelin A."/>
            <person name="Schneider C."/>
            <person name="Schoenbach C."/>
            <person name="Sekiguchi K."/>
            <person name="Semple C.A."/>
            <person name="Seno S."/>
            <person name="Sessa L."/>
            <person name="Sheng Y."/>
            <person name="Shibata Y."/>
            <person name="Shimada H."/>
            <person name="Shimada K."/>
            <person name="Silva D."/>
            <person name="Sinclair B."/>
            <person name="Sperling S."/>
            <person name="Stupka E."/>
            <person name="Sugiura K."/>
            <person name="Sultana R."/>
            <person name="Takenaka Y."/>
            <person name="Taki K."/>
            <person name="Tammoja K."/>
            <person name="Tan S.L."/>
            <person name="Tang S."/>
            <person name="Taylor M.S."/>
            <person name="Tegner J."/>
            <person name="Teichmann S.A."/>
            <person name="Ueda H.R."/>
            <person name="van Nimwegen E."/>
            <person name="Verardo R."/>
            <person name="Wei C.L."/>
            <person name="Yagi K."/>
            <person name="Yamanishi H."/>
            <person name="Zabarovsky E."/>
            <person name="Zhu S."/>
            <person name="Zimmer A."/>
            <person name="Hide W."/>
            <person name="Bult C."/>
            <person name="Grimmond S.M."/>
            <person name="Teasdale R.D."/>
            <person name="Liu E.T."/>
            <person name="Brusic V."/>
            <person name="Quackenbush J."/>
            <person name="Wahlestedt C."/>
            <person name="Mattick J.S."/>
            <person name="Hume D.A."/>
            <person name="Kai C."/>
            <person name="Sasaki D."/>
            <person name="Tomaru Y."/>
            <person name="Fukuda S."/>
            <person name="Kanamori-Katayama M."/>
            <person name="Suzuki M."/>
            <person name="Aoki J."/>
            <person name="Arakawa T."/>
            <person name="Iida J."/>
            <person name="Imamura K."/>
            <person name="Itoh M."/>
            <person name="Kato T."/>
            <person name="Kawaji H."/>
            <person name="Kawagashira N."/>
            <person name="Kawashima T."/>
            <person name="Kojima M."/>
            <person name="Kondo S."/>
            <person name="Konno H."/>
            <person name="Nakano K."/>
            <person name="Ninomiya N."/>
            <person name="Nishio T."/>
            <person name="Okada M."/>
            <person name="Plessy C."/>
            <person name="Shibata K."/>
            <person name="Shiraki T."/>
            <person name="Suzuki S."/>
            <person name="Tagami M."/>
            <person name="Waki K."/>
            <person name="Watahiki A."/>
            <person name="Okamura-Oho Y."/>
            <person name="Suzuki H."/>
            <person name="Kawai J."/>
            <person name="Hayashizaki Y."/>
        </authorList>
    </citation>
    <scope>NUCLEOTIDE SEQUENCE [LARGE SCALE MRNA] (ISOFORM 2)</scope>
    <source>
        <strain evidence="19">C57BL/6J</strain>
        <tissue evidence="19">Eye</tissue>
    </source>
</reference>
<reference key="4">
    <citation type="journal article" date="2009" name="PLoS Biol.">
        <title>Lineage-specific biology revealed by a finished genome assembly of the mouse.</title>
        <authorList>
            <person name="Church D.M."/>
            <person name="Goodstadt L."/>
            <person name="Hillier L.W."/>
            <person name="Zody M.C."/>
            <person name="Goldstein S."/>
            <person name="She X."/>
            <person name="Bult C.J."/>
            <person name="Agarwala R."/>
            <person name="Cherry J.L."/>
            <person name="DiCuccio M."/>
            <person name="Hlavina W."/>
            <person name="Kapustin Y."/>
            <person name="Meric P."/>
            <person name="Maglott D."/>
            <person name="Birtle Z."/>
            <person name="Marques A.C."/>
            <person name="Graves T."/>
            <person name="Zhou S."/>
            <person name="Teague B."/>
            <person name="Potamousis K."/>
            <person name="Churas C."/>
            <person name="Place M."/>
            <person name="Herschleb J."/>
            <person name="Runnheim R."/>
            <person name="Forrest D."/>
            <person name="Amos-Landgraf J."/>
            <person name="Schwartz D.C."/>
            <person name="Cheng Z."/>
            <person name="Lindblad-Toh K."/>
            <person name="Eichler E.E."/>
            <person name="Ponting C.P."/>
        </authorList>
    </citation>
    <scope>NUCLEOTIDE SEQUENCE [LARGE SCALE GENOMIC DNA]</scope>
    <source>
        <strain>C57BL/6J</strain>
    </source>
</reference>
<reference evidence="20" key="5">
    <citation type="submission" date="2005-09" db="EMBL/GenBank/DDBJ databases">
        <authorList>
            <person name="Mural R.J."/>
            <person name="Adams M.D."/>
            <person name="Myers E.W."/>
            <person name="Smith H.O."/>
            <person name="Venter J.C."/>
        </authorList>
    </citation>
    <scope>NUCLEOTIDE SEQUENCE [LARGE SCALE GENOMIC DNA]</scope>
</reference>
<reference evidence="12 16" key="6">
    <citation type="journal article" date="2004" name="Genome Res.">
        <title>The status, quality, and expansion of the NIH full-length cDNA project: the Mammalian Gene Collection (MGC).</title>
        <authorList>
            <consortium name="The MGC Project Team"/>
        </authorList>
    </citation>
    <scope>NUCLEOTIDE SEQUENCE [LARGE SCALE MRNA] (ISOFORM 1)</scope>
</reference>
<reference evidence="12 15" key="7">
    <citation type="journal article" date="1998" name="Cell">
        <title>Identification of ligands for olfactory receptors by functional expression of a receptor library.</title>
        <authorList>
            <person name="Krautwurst D."/>
            <person name="Yau K.W."/>
            <person name="Reed R.R."/>
        </authorList>
    </citation>
    <scope>NUCLEOTIDE SEQUENCE [MRNA] OF 65-287</scope>
    <scope>FUNCTION</scope>
    <source>
        <strain evidence="8">C57BL/6J</strain>
        <tissue evidence="15">Olfactory epithelium</tissue>
    </source>
</reference>
<feature type="chain" id="PRO_0000422155" description="Olfactory receptor 2V1">
    <location>
        <begin position="1"/>
        <end position="315"/>
    </location>
</feature>
<feature type="transmembrane region" description="Helical" evidence="1">
    <location>
        <begin position="31"/>
        <end position="51"/>
    </location>
</feature>
<feature type="transmembrane region" description="Helical" evidence="1">
    <location>
        <begin position="59"/>
        <end position="79"/>
    </location>
</feature>
<feature type="transmembrane region" description="Helical" evidence="1">
    <location>
        <begin position="100"/>
        <end position="120"/>
    </location>
</feature>
<feature type="transmembrane region" description="Helical" evidence="1">
    <location>
        <begin position="145"/>
        <end position="165"/>
    </location>
</feature>
<feature type="transmembrane region" description="Helical" evidence="1">
    <location>
        <begin position="196"/>
        <end position="216"/>
    </location>
</feature>
<feature type="transmembrane region" description="Helical" evidence="1">
    <location>
        <begin position="239"/>
        <end position="259"/>
    </location>
</feature>
<feature type="transmembrane region" description="Helical" evidence="1">
    <location>
        <begin position="273"/>
        <end position="293"/>
    </location>
</feature>
<feature type="disulfide bond" evidence="2">
    <location>
        <begin position="98"/>
        <end position="180"/>
    </location>
</feature>
<feature type="splice variant" id="VSP_046444" description="In isoform 2." evidence="9 10">
    <location>
        <begin position="1"/>
        <end position="32"/>
    </location>
</feature>
<feature type="sequence conflict" description="In Ref. 7; AAD13327." evidence="12" ref="7">
    <original>A</original>
    <variation>T</variation>
    <location>
        <position position="225"/>
    </location>
</feature>
<gene>
    <name evidence="21" type="primary">Or2v1</name>
    <name evidence="17" type="synonym">Mor276-1</name>
    <name evidence="16 21" type="synonym">Olfr56</name>
</gene>
<proteinExistence type="evidence at transcript level"/>